<organism>
    <name type="scientific">Allorhizobium ampelinum (strain ATCC BAA-846 / DSM 112012 / S4)</name>
    <name type="common">Agrobacterium vitis (strain S4)</name>
    <dbReference type="NCBI Taxonomy" id="311402"/>
    <lineage>
        <taxon>Bacteria</taxon>
        <taxon>Pseudomonadati</taxon>
        <taxon>Pseudomonadota</taxon>
        <taxon>Alphaproteobacteria</taxon>
        <taxon>Hyphomicrobiales</taxon>
        <taxon>Rhizobiaceae</taxon>
        <taxon>Rhizobium/Agrobacterium group</taxon>
        <taxon>Allorhizobium</taxon>
        <taxon>Allorhizobium ampelinum</taxon>
    </lineage>
</organism>
<dbReference type="EMBL" id="CP000634">
    <property type="protein sequence ID" value="ACM39202.1"/>
    <property type="molecule type" value="Genomic_DNA"/>
</dbReference>
<dbReference type="RefSeq" id="WP_012654444.1">
    <property type="nucleotide sequence ID" value="NC_011988.1"/>
</dbReference>
<dbReference type="SMR" id="B9K2V4"/>
<dbReference type="STRING" id="311402.Avi_6225"/>
<dbReference type="KEGG" id="avi:Avi_6225"/>
<dbReference type="eggNOG" id="COG1301">
    <property type="taxonomic scope" value="Bacteria"/>
</dbReference>
<dbReference type="HOGENOM" id="CLU_019375_7_0_5"/>
<dbReference type="Proteomes" id="UP000001596">
    <property type="component" value="Chromosome 2"/>
</dbReference>
<dbReference type="GO" id="GO:0005886">
    <property type="term" value="C:plasma membrane"/>
    <property type="evidence" value="ECO:0007669"/>
    <property type="project" value="UniProtKB-SubCell"/>
</dbReference>
<dbReference type="GO" id="GO:0015138">
    <property type="term" value="F:fumarate transmembrane transporter activity"/>
    <property type="evidence" value="ECO:0007669"/>
    <property type="project" value="TreeGrafter"/>
</dbReference>
<dbReference type="GO" id="GO:0015366">
    <property type="term" value="F:malate:proton symporter activity"/>
    <property type="evidence" value="ECO:0007669"/>
    <property type="project" value="TreeGrafter"/>
</dbReference>
<dbReference type="GO" id="GO:0015141">
    <property type="term" value="F:succinate transmembrane transporter activity"/>
    <property type="evidence" value="ECO:0007669"/>
    <property type="project" value="TreeGrafter"/>
</dbReference>
<dbReference type="GO" id="GO:0070778">
    <property type="term" value="P:L-aspartate transmembrane transport"/>
    <property type="evidence" value="ECO:0007669"/>
    <property type="project" value="TreeGrafter"/>
</dbReference>
<dbReference type="FunFam" id="1.10.3860.10:FF:000001">
    <property type="entry name" value="C4-dicarboxylate transport protein"/>
    <property type="match status" value="1"/>
</dbReference>
<dbReference type="Gene3D" id="1.10.3860.10">
    <property type="entry name" value="Sodium:dicarboxylate symporter"/>
    <property type="match status" value="1"/>
</dbReference>
<dbReference type="HAMAP" id="MF_01300">
    <property type="entry name" value="C4_dicarb_transport"/>
    <property type="match status" value="1"/>
</dbReference>
<dbReference type="InterPro" id="IPR023954">
    <property type="entry name" value="C4_dicarb_transport"/>
</dbReference>
<dbReference type="InterPro" id="IPR001991">
    <property type="entry name" value="Na-dicarboxylate_symporter"/>
</dbReference>
<dbReference type="InterPro" id="IPR018107">
    <property type="entry name" value="Na-dicarboxylate_symporter_CS"/>
</dbReference>
<dbReference type="InterPro" id="IPR036458">
    <property type="entry name" value="Na:dicarbo_symporter_sf"/>
</dbReference>
<dbReference type="NCBIfam" id="NF002461">
    <property type="entry name" value="PRK01663.1"/>
    <property type="match status" value="1"/>
</dbReference>
<dbReference type="NCBIfam" id="NF009587">
    <property type="entry name" value="PRK13027.1"/>
    <property type="match status" value="1"/>
</dbReference>
<dbReference type="PANTHER" id="PTHR42865:SF1">
    <property type="entry name" value="AEROBIC C4-DICARBOXYLATE TRANSPORT PROTEIN"/>
    <property type="match status" value="1"/>
</dbReference>
<dbReference type="PANTHER" id="PTHR42865">
    <property type="entry name" value="PROTON/GLUTAMATE-ASPARTATE SYMPORTER"/>
    <property type="match status" value="1"/>
</dbReference>
<dbReference type="Pfam" id="PF00375">
    <property type="entry name" value="SDF"/>
    <property type="match status" value="1"/>
</dbReference>
<dbReference type="PRINTS" id="PR00173">
    <property type="entry name" value="EDTRNSPORT"/>
</dbReference>
<dbReference type="SUPFAM" id="SSF118215">
    <property type="entry name" value="Proton glutamate symport protein"/>
    <property type="match status" value="1"/>
</dbReference>
<dbReference type="PROSITE" id="PS00713">
    <property type="entry name" value="NA_DICARBOXYL_SYMP_1"/>
    <property type="match status" value="1"/>
</dbReference>
<dbReference type="PROSITE" id="PS00714">
    <property type="entry name" value="NA_DICARBOXYL_SYMP_2"/>
    <property type="match status" value="1"/>
</dbReference>
<accession>B9K2V4</accession>
<evidence type="ECO:0000255" key="1">
    <source>
        <dbReference type="HAMAP-Rule" id="MF_01300"/>
    </source>
</evidence>
<comment type="function">
    <text evidence="1">Responsible for the transport of dicarboxylates such as succinate, fumarate, and malate from the periplasm across the membrane.</text>
</comment>
<comment type="subcellular location">
    <subcellularLocation>
        <location evidence="1">Cell inner membrane</location>
        <topology evidence="1">Multi-pass membrane protein</topology>
    </subcellularLocation>
</comment>
<comment type="similarity">
    <text evidence="1">Belongs to the dicarboxylate/amino acid:cation symporter (DAACS) (TC 2.A.23) family.</text>
</comment>
<name>DCTA_ALLAM</name>
<proteinExistence type="inferred from homology"/>
<gene>
    <name evidence="1" type="primary">dctA</name>
    <name type="ordered locus">Avi_6225</name>
</gene>
<protein>
    <recommendedName>
        <fullName evidence="1">C4-dicarboxylate transport protein</fullName>
    </recommendedName>
</protein>
<keyword id="KW-0997">Cell inner membrane</keyword>
<keyword id="KW-1003">Cell membrane</keyword>
<keyword id="KW-0472">Membrane</keyword>
<keyword id="KW-1185">Reference proteome</keyword>
<keyword id="KW-0769">Symport</keyword>
<keyword id="KW-0812">Transmembrane</keyword>
<keyword id="KW-1133">Transmembrane helix</keyword>
<keyword id="KW-0813">Transport</keyword>
<sequence>MHISTTTAPQGGKLPFYRHLYFQVIVAIIGGILLGHFYPQTGEALKPLGDAFIKLVKMVIAPVIFLTVATGIAGMSDLKKVGRVAGKAMIYFLCFSTLALVVGMLVSNILQPGAGMHINPATLDGKAVASYAQQAHDSTITGFLMNIIPDTIVGAFAKGDILQVLFFSVLFGLALAMVGDLGKPVTNFLQALTAPVFKLVAILMKAAPIGAFGAMAFTIGKYGIGSIANLAFLIGTFYLTSLLFVLVVLGGVARYNGFSILALIRYIKEELLLVLGTSSSEAALPGLMAKMERAGCKRSVVGLVIPTGYSFNLDGTNIYMTLAALFIAQATDIQLSLGDQILLLLVAMLSSKGAAGITGAGFITLAATLSVVPSVPVAGMALILGIDRFMSECRALTNFIGNAVATVVVARWENELDQTQFRAAMAGELPEEIDVVAEPVPTAA</sequence>
<reference key="1">
    <citation type="journal article" date="2009" name="J. Bacteriol.">
        <title>Genome sequences of three Agrobacterium biovars help elucidate the evolution of multichromosome genomes in bacteria.</title>
        <authorList>
            <person name="Slater S.C."/>
            <person name="Goldman B.S."/>
            <person name="Goodner B."/>
            <person name="Setubal J.C."/>
            <person name="Farrand S.K."/>
            <person name="Nester E.W."/>
            <person name="Burr T.J."/>
            <person name="Banta L."/>
            <person name="Dickerman A.W."/>
            <person name="Paulsen I."/>
            <person name="Otten L."/>
            <person name="Suen G."/>
            <person name="Welch R."/>
            <person name="Almeida N.F."/>
            <person name="Arnold F."/>
            <person name="Burton O.T."/>
            <person name="Du Z."/>
            <person name="Ewing A."/>
            <person name="Godsy E."/>
            <person name="Heisel S."/>
            <person name="Houmiel K.L."/>
            <person name="Jhaveri J."/>
            <person name="Lu J."/>
            <person name="Miller N.M."/>
            <person name="Norton S."/>
            <person name="Chen Q."/>
            <person name="Phoolcharoen W."/>
            <person name="Ohlin V."/>
            <person name="Ondrusek D."/>
            <person name="Pride N."/>
            <person name="Stricklin S.L."/>
            <person name="Sun J."/>
            <person name="Wheeler C."/>
            <person name="Wilson L."/>
            <person name="Zhu H."/>
            <person name="Wood D.W."/>
        </authorList>
    </citation>
    <scope>NUCLEOTIDE SEQUENCE [LARGE SCALE GENOMIC DNA]</scope>
    <source>
        <strain>ATCC BAA-846 / DSM 112012 / S4</strain>
    </source>
</reference>
<feature type="chain" id="PRO_1000165282" description="C4-dicarboxylate transport protein">
    <location>
        <begin position="1"/>
        <end position="444"/>
    </location>
</feature>
<feature type="transmembrane region" description="Helical" evidence="1">
    <location>
        <begin position="19"/>
        <end position="39"/>
    </location>
</feature>
<feature type="transmembrane region" description="Helical" evidence="1">
    <location>
        <begin position="55"/>
        <end position="75"/>
    </location>
</feature>
<feature type="transmembrane region" description="Helical" evidence="1">
    <location>
        <begin position="90"/>
        <end position="110"/>
    </location>
</feature>
<feature type="transmembrane region" description="Helical" evidence="1">
    <location>
        <begin position="161"/>
        <end position="181"/>
    </location>
</feature>
<feature type="transmembrane region" description="Helical" evidence="1">
    <location>
        <begin position="199"/>
        <end position="219"/>
    </location>
</feature>
<feature type="transmembrane region" description="Helical" evidence="1">
    <location>
        <begin position="230"/>
        <end position="250"/>
    </location>
</feature>
<feature type="transmembrane region" description="Helical" evidence="1">
    <location>
        <begin position="343"/>
        <end position="363"/>
    </location>
</feature>
<feature type="transmembrane region" description="Helical" evidence="1">
    <location>
        <begin position="366"/>
        <end position="386"/>
    </location>
</feature>